<evidence type="ECO:0000250" key="1">
    <source>
        <dbReference type="UniProtKB" id="P04798"/>
    </source>
</evidence>
<evidence type="ECO:0000255" key="2"/>
<evidence type="ECO:0000269" key="3">
    <source>
    </source>
</evidence>
<evidence type="ECO:0000303" key="4">
    <source>
    </source>
</evidence>
<evidence type="ECO:0000305" key="5"/>
<dbReference type="EC" id="1.14.14.-" evidence="3"/>
<dbReference type="EMBL" id="MK636705">
    <property type="protein sequence ID" value="QDS03631.1"/>
    <property type="molecule type" value="mRNA"/>
</dbReference>
<dbReference type="SMR" id="A0A517FNC4"/>
<dbReference type="UniPathway" id="UPA00296"/>
<dbReference type="GO" id="GO:0016020">
    <property type="term" value="C:membrane"/>
    <property type="evidence" value="ECO:0007669"/>
    <property type="project" value="UniProtKB-SubCell"/>
</dbReference>
<dbReference type="GO" id="GO:0020037">
    <property type="term" value="F:heme binding"/>
    <property type="evidence" value="ECO:0007669"/>
    <property type="project" value="InterPro"/>
</dbReference>
<dbReference type="GO" id="GO:0005506">
    <property type="term" value="F:iron ion binding"/>
    <property type="evidence" value="ECO:0007669"/>
    <property type="project" value="InterPro"/>
</dbReference>
<dbReference type="GO" id="GO:0004497">
    <property type="term" value="F:monooxygenase activity"/>
    <property type="evidence" value="ECO:0007669"/>
    <property type="project" value="UniProtKB-KW"/>
</dbReference>
<dbReference type="GO" id="GO:0016705">
    <property type="term" value="F:oxidoreductase activity, acting on paired donors, with incorporation or reduction of molecular oxygen"/>
    <property type="evidence" value="ECO:0000314"/>
    <property type="project" value="UniProtKB"/>
</dbReference>
<dbReference type="GO" id="GO:0008203">
    <property type="term" value="P:cholesterol metabolic process"/>
    <property type="evidence" value="ECO:0000314"/>
    <property type="project" value="UniProtKB"/>
</dbReference>
<dbReference type="GO" id="GO:0016135">
    <property type="term" value="P:saponin biosynthetic process"/>
    <property type="evidence" value="ECO:0000314"/>
    <property type="project" value="UniProtKB"/>
</dbReference>
<dbReference type="GO" id="GO:0006694">
    <property type="term" value="P:steroid biosynthetic process"/>
    <property type="evidence" value="ECO:0000314"/>
    <property type="project" value="UniProtKB"/>
</dbReference>
<dbReference type="CDD" id="cd20642">
    <property type="entry name" value="CYP72"/>
    <property type="match status" value="1"/>
</dbReference>
<dbReference type="FunFam" id="1.10.630.10:FF:000029">
    <property type="entry name" value="Cytochrome P450 734A1"/>
    <property type="match status" value="1"/>
</dbReference>
<dbReference type="Gene3D" id="1.10.630.10">
    <property type="entry name" value="Cytochrome P450"/>
    <property type="match status" value="1"/>
</dbReference>
<dbReference type="InterPro" id="IPR001128">
    <property type="entry name" value="Cyt_P450"/>
</dbReference>
<dbReference type="InterPro" id="IPR017972">
    <property type="entry name" value="Cyt_P450_CS"/>
</dbReference>
<dbReference type="InterPro" id="IPR002401">
    <property type="entry name" value="Cyt_P450_E_grp-I"/>
</dbReference>
<dbReference type="InterPro" id="IPR036396">
    <property type="entry name" value="Cyt_P450_sf"/>
</dbReference>
<dbReference type="InterPro" id="IPR050665">
    <property type="entry name" value="Cytochrome_P450_Monooxygen"/>
</dbReference>
<dbReference type="PANTHER" id="PTHR24282:SF255">
    <property type="entry name" value="CYTOCHROME P450 72A11-RELATED"/>
    <property type="match status" value="1"/>
</dbReference>
<dbReference type="PANTHER" id="PTHR24282">
    <property type="entry name" value="CYTOCHROME P450 FAMILY MEMBER"/>
    <property type="match status" value="1"/>
</dbReference>
<dbReference type="Pfam" id="PF00067">
    <property type="entry name" value="p450"/>
    <property type="match status" value="1"/>
</dbReference>
<dbReference type="PRINTS" id="PR00463">
    <property type="entry name" value="EP450I"/>
</dbReference>
<dbReference type="PRINTS" id="PR00385">
    <property type="entry name" value="P450"/>
</dbReference>
<dbReference type="SUPFAM" id="SSF48264">
    <property type="entry name" value="Cytochrome P450"/>
    <property type="match status" value="1"/>
</dbReference>
<dbReference type="PROSITE" id="PS00086">
    <property type="entry name" value="CYTOCHROME_P450"/>
    <property type="match status" value="1"/>
</dbReference>
<keyword id="KW-0153">Cholesterol metabolism</keyword>
<keyword id="KW-0349">Heme</keyword>
<keyword id="KW-0408">Iron</keyword>
<keyword id="KW-0444">Lipid biosynthesis</keyword>
<keyword id="KW-0443">Lipid metabolism</keyword>
<keyword id="KW-0472">Membrane</keyword>
<keyword id="KW-0479">Metal-binding</keyword>
<keyword id="KW-0503">Monooxygenase</keyword>
<keyword id="KW-0560">Oxidoreductase</keyword>
<keyword id="KW-0752">Steroid biosynthesis</keyword>
<keyword id="KW-0753">Steroid metabolism</keyword>
<keyword id="KW-1207">Sterol metabolism</keyword>
<keyword id="KW-0812">Transmembrane</keyword>
<keyword id="KW-1133">Transmembrane helix</keyword>
<proteinExistence type="evidence at protein level"/>
<comment type="function">
    <text evidence="3">Involved in the biosynthesis of spiroketal steroid and saponin natural products from cholesterol such as diosgenin and analogs (e.g. furostanol and spirostanol), plant defense compounds used as main precursors for the industrial production of steroid hormones (PubMed:31324795). During the 5,6-spiroketalization of cholesterol, may catalyze the 27-monohydroxylation of furostanol-type steroid to an intermediate product that undergoes a stereospecific formation of the terminal heterocycle to yield diosgenin (PubMed:31324795).</text>
</comment>
<comment type="pathway">
    <text evidence="3">Steroid metabolism; cholesterol metabolism.</text>
</comment>
<comment type="subcellular location">
    <subcellularLocation>
        <location evidence="2">Membrane</location>
        <topology evidence="2">Single-pass membrane protein</topology>
    </subcellularLocation>
</comment>
<comment type="tissue specificity">
    <text evidence="3">Mainly expressed in leaves and, at low levels, in roots, fruits and stems.</text>
</comment>
<comment type="similarity">
    <text evidence="5">Belongs to the cytochrome P450 family.</text>
</comment>
<protein>
    <recommendedName>
        <fullName evidence="4">Cytochrome P450 CYP72A616</fullName>
        <shortName evidence="4">PpCYP72A616</shortName>
        <ecNumber evidence="3">1.14.14.-</ecNumber>
    </recommendedName>
</protein>
<feature type="chain" id="PRO_0000456405" description="Cytochrome P450 CYP72A616">
    <location>
        <begin position="1"/>
        <end position="517"/>
    </location>
</feature>
<feature type="transmembrane region" description="Helical" evidence="2">
    <location>
        <begin position="5"/>
        <end position="25"/>
    </location>
</feature>
<feature type="binding site" description="axial binding residue" evidence="1">
    <location>
        <position position="465"/>
    </location>
    <ligand>
        <name>heme</name>
        <dbReference type="ChEBI" id="CHEBI:30413"/>
    </ligand>
    <ligandPart>
        <name>Fe</name>
        <dbReference type="ChEBI" id="CHEBI:18248"/>
    </ligandPart>
</feature>
<name>72A61_PARPY</name>
<sequence>MDSRVLGALAALLAAAAAWVMRAAAEWLWWRPRRLERSLRSQGVDGNLYRFLNGDLKETVRLTKEARAQPISPPSHRFLHRINPLLLRAISHHGKFALTWIGPTPRVSIMDPELVREVLSNKFGHFAKPKAAPIVKLLATGLANYEGEKWVRHRRIINPAFHLEKLKRMLPAFFSCCSELIGRWESLVGCDESREVDVWPELQNLTGDVISRTAFGSSYAEGRRIFQLQSEQAELLIQAVQTVYIPGYRFLPTPKNIRRTKIDKEVRALLRSIIEKRENAMKMGDVHDDLLGLLMEYNLKESEHFNSKNIGMTTEDVIEECKLFYFAGQETTSVLLTWTMILLGMHPSWQDRAREEVSQVFGKNKPDFDGLSRLKTVTMILYEVLRLYPPIIFLTRRTYKPMMLGGITFPPEVQLALPIIFIHHDPEFWGEDAEEFNPDRFADGVSKASKNQMAFFPFGWGPRICIGQGFAMLEAKMGLSMILQRFSFELSPNYSHAPHTKITLQPQHGAQMVLHRL</sequence>
<organism>
    <name type="scientific">Paris polyphylla</name>
    <name type="common">Daiswa polyphylla</name>
    <dbReference type="NCBI Taxonomy" id="49666"/>
    <lineage>
        <taxon>Eukaryota</taxon>
        <taxon>Viridiplantae</taxon>
        <taxon>Streptophyta</taxon>
        <taxon>Embryophyta</taxon>
        <taxon>Tracheophyta</taxon>
        <taxon>Spermatophyta</taxon>
        <taxon>Magnoliopsida</taxon>
        <taxon>Liliopsida</taxon>
        <taxon>Liliales</taxon>
        <taxon>Melanthiaceae</taxon>
        <taxon>Paris</taxon>
    </lineage>
</organism>
<accession>A0A517FNC4</accession>
<reference key="1">
    <citation type="journal article" date="2019" name="Nat. Commun.">
        <title>Repeated evolution of cytochrome P450-mediated spiroketal steroid biosynthesis in plants.</title>
        <authorList>
            <person name="Christ B."/>
            <person name="Xu C."/>
            <person name="Xu M."/>
            <person name="Li F.-S."/>
            <person name="Wada N."/>
            <person name="Mitchell A.J."/>
            <person name="Han X.-L."/>
            <person name="Wen M.-L."/>
            <person name="Fujita M."/>
            <person name="Weng J.-K."/>
        </authorList>
    </citation>
    <scope>NUCLEOTIDE SEQUENCE [MRNA]</scope>
    <scope>FUNCTION</scope>
    <scope>CATALYTIC ACTIVITY</scope>
    <scope>PATHWAY</scope>
    <scope>TISSUE SPECIFICITY</scope>
    <source>
        <tissue>Fruit</tissue>
        <tissue>Leaf</tissue>
        <tissue>Root</tissue>
        <tissue>Stem</tissue>
    </source>
</reference>
<gene>
    <name evidence="4" type="primary">CYP72A616</name>
</gene>